<dbReference type="SMR" id="P80393"/>
<dbReference type="InParanoid" id="P80393"/>
<dbReference type="Proteomes" id="UP000001645">
    <property type="component" value="Unplaced"/>
</dbReference>
<dbReference type="GO" id="GO:0005576">
    <property type="term" value="C:extracellular region"/>
    <property type="evidence" value="ECO:0007669"/>
    <property type="project" value="UniProtKB-SubCell"/>
</dbReference>
<dbReference type="GO" id="GO:0042742">
    <property type="term" value="P:defense response to bacterium"/>
    <property type="evidence" value="ECO:0007669"/>
    <property type="project" value="UniProtKB-KW"/>
</dbReference>
<sequence length="25" mass="2592">LSCKRGTCHFGRCPSHLIKGSCSGG</sequence>
<protein>
    <recommendedName>
        <fullName>Antimicrobial peptide THP3</fullName>
    </recommendedName>
    <alternativeName>
        <fullName>Turkey heterophil peptide 3</fullName>
    </alternativeName>
</protein>
<reference key="1">
    <citation type="journal article" date="1994" name="J. Leukoc. Biol.">
        <title>Isolation of antimicrobial peptides from avian heterophils.</title>
        <authorList>
            <person name="Evans E.W."/>
            <person name="Beach G.G."/>
            <person name="Wunderlich J."/>
            <person name="Harmon B.G."/>
        </authorList>
    </citation>
    <scope>PROTEIN SEQUENCE</scope>
</reference>
<name>AMP3_MELGA</name>
<accession>P80393</accession>
<comment type="function">
    <text>Bactericidal activity; inhibits Staphylococcus aureus.</text>
</comment>
<comment type="subcellular location">
    <subcellularLocation>
        <location>Secreted</location>
    </subcellularLocation>
</comment>
<keyword id="KW-0044">Antibiotic</keyword>
<keyword id="KW-0929">Antimicrobial</keyword>
<keyword id="KW-0903">Direct protein sequencing</keyword>
<keyword id="KW-1185">Reference proteome</keyword>
<keyword id="KW-0964">Secreted</keyword>
<organism>
    <name type="scientific">Meleagris gallopavo</name>
    <name type="common">Wild turkey</name>
    <dbReference type="NCBI Taxonomy" id="9103"/>
    <lineage>
        <taxon>Eukaryota</taxon>
        <taxon>Metazoa</taxon>
        <taxon>Chordata</taxon>
        <taxon>Craniata</taxon>
        <taxon>Vertebrata</taxon>
        <taxon>Euteleostomi</taxon>
        <taxon>Archelosauria</taxon>
        <taxon>Archosauria</taxon>
        <taxon>Dinosauria</taxon>
        <taxon>Saurischia</taxon>
        <taxon>Theropoda</taxon>
        <taxon>Coelurosauria</taxon>
        <taxon>Aves</taxon>
        <taxon>Neognathae</taxon>
        <taxon>Galloanserae</taxon>
        <taxon>Galliformes</taxon>
        <taxon>Phasianidae</taxon>
        <taxon>Meleagridinae</taxon>
        <taxon>Meleagris</taxon>
    </lineage>
</organism>
<feature type="chain" id="PRO_0000064336" description="Antimicrobial peptide THP3">
    <location>
        <begin position="1"/>
        <end position="25" status="greater than"/>
    </location>
</feature>
<feature type="non-terminal residue">
    <location>
        <position position="25"/>
    </location>
</feature>
<proteinExistence type="evidence at protein level"/>